<reference key="1">
    <citation type="journal article" date="2010" name="PLoS ONE">
        <title>Genome sequence of Cronobacter sakazakii BAA-894 and comparative genomic hybridization analysis with other Cronobacter species.</title>
        <authorList>
            <person name="Kucerova E."/>
            <person name="Clifton S.W."/>
            <person name="Xia X.Q."/>
            <person name="Long F."/>
            <person name="Porwollik S."/>
            <person name="Fulton L."/>
            <person name="Fronick C."/>
            <person name="Minx P."/>
            <person name="Kyung K."/>
            <person name="Warren W."/>
            <person name="Fulton R."/>
            <person name="Feng D."/>
            <person name="Wollam A."/>
            <person name="Shah N."/>
            <person name="Bhonagiri V."/>
            <person name="Nash W.E."/>
            <person name="Hallsworth-Pepin K."/>
            <person name="Wilson R.K."/>
            <person name="McClelland M."/>
            <person name="Forsythe S.J."/>
        </authorList>
    </citation>
    <scope>NUCLEOTIDE SEQUENCE [LARGE SCALE GENOMIC DNA]</scope>
    <source>
        <strain>ATCC BAA-894</strain>
    </source>
</reference>
<comment type="function">
    <text evidence="1">Part of the twin-arginine translocation (Tat) system that transports large folded proteins containing a characteristic twin-arginine motif in their signal peptide across membranes. TatE shares overlapping functions with TatA.</text>
</comment>
<comment type="subcellular location">
    <subcellularLocation>
        <location evidence="1">Cell inner membrane</location>
        <topology evidence="1">Single-pass membrane protein</topology>
    </subcellularLocation>
</comment>
<comment type="similarity">
    <text evidence="1">Belongs to the TatA/E family. TatE subfamily.</text>
</comment>
<feature type="chain" id="PRO_0000412966" description="Probable Sec-independent protein translocase protein TatE">
    <location>
        <begin position="1"/>
        <end position="67"/>
    </location>
</feature>
<feature type="transmembrane region" description="Helical" evidence="1">
    <location>
        <begin position="4"/>
        <end position="21"/>
    </location>
</feature>
<feature type="region of interest" description="Disordered" evidence="2">
    <location>
        <begin position="44"/>
        <end position="67"/>
    </location>
</feature>
<sequence length="67" mass="6980">MGEISITKLLVIAALVVLLFGTKKLRTLGGDLGAAIKGFKKAMNDDDTGAKTPAASEAPAERLSHKE</sequence>
<evidence type="ECO:0000255" key="1">
    <source>
        <dbReference type="HAMAP-Rule" id="MF_00903"/>
    </source>
</evidence>
<evidence type="ECO:0000256" key="2">
    <source>
        <dbReference type="SAM" id="MobiDB-lite"/>
    </source>
</evidence>
<organism>
    <name type="scientific">Cronobacter sakazakii (strain ATCC BAA-894)</name>
    <name type="common">Enterobacter sakazakii</name>
    <dbReference type="NCBI Taxonomy" id="290339"/>
    <lineage>
        <taxon>Bacteria</taxon>
        <taxon>Pseudomonadati</taxon>
        <taxon>Pseudomonadota</taxon>
        <taxon>Gammaproteobacteria</taxon>
        <taxon>Enterobacterales</taxon>
        <taxon>Enterobacteriaceae</taxon>
        <taxon>Cronobacter</taxon>
    </lineage>
</organism>
<keyword id="KW-0997">Cell inner membrane</keyword>
<keyword id="KW-1003">Cell membrane</keyword>
<keyword id="KW-0472">Membrane</keyword>
<keyword id="KW-0653">Protein transport</keyword>
<keyword id="KW-1185">Reference proteome</keyword>
<keyword id="KW-0811">Translocation</keyword>
<keyword id="KW-0812">Transmembrane</keyword>
<keyword id="KW-1133">Transmembrane helix</keyword>
<keyword id="KW-0813">Transport</keyword>
<proteinExistence type="inferred from homology"/>
<accession>A7MNQ0</accession>
<protein>
    <recommendedName>
        <fullName evidence="1">Probable Sec-independent protein translocase protein TatE</fullName>
    </recommendedName>
</protein>
<name>TATE_CROS8</name>
<gene>
    <name evidence="1" type="primary">tatE</name>
    <name type="ordered locus">ESA_02701</name>
</gene>
<dbReference type="EMBL" id="CP000783">
    <property type="protein sequence ID" value="ABU77933.1"/>
    <property type="molecule type" value="Genomic_DNA"/>
</dbReference>
<dbReference type="RefSeq" id="WP_007865585.1">
    <property type="nucleotide sequence ID" value="NC_009778.1"/>
</dbReference>
<dbReference type="SMR" id="A7MNQ0"/>
<dbReference type="GeneID" id="56731493"/>
<dbReference type="KEGG" id="esa:ESA_02701"/>
<dbReference type="HOGENOM" id="CLU_086034_5_3_6"/>
<dbReference type="Proteomes" id="UP000000260">
    <property type="component" value="Chromosome"/>
</dbReference>
<dbReference type="GO" id="GO:0033281">
    <property type="term" value="C:TAT protein transport complex"/>
    <property type="evidence" value="ECO:0007669"/>
    <property type="project" value="UniProtKB-UniRule"/>
</dbReference>
<dbReference type="GO" id="GO:0008320">
    <property type="term" value="F:protein transmembrane transporter activity"/>
    <property type="evidence" value="ECO:0007669"/>
    <property type="project" value="UniProtKB-UniRule"/>
</dbReference>
<dbReference type="GO" id="GO:0043953">
    <property type="term" value="P:protein transport by the Tat complex"/>
    <property type="evidence" value="ECO:0007669"/>
    <property type="project" value="UniProtKB-UniRule"/>
</dbReference>
<dbReference type="FunFam" id="1.20.5.3310:FF:000001">
    <property type="entry name" value="Probable Sec-independent protein translocase protein TatE"/>
    <property type="match status" value="1"/>
</dbReference>
<dbReference type="Gene3D" id="1.20.5.3310">
    <property type="match status" value="1"/>
</dbReference>
<dbReference type="HAMAP" id="MF_00236">
    <property type="entry name" value="TatA_E"/>
    <property type="match status" value="1"/>
</dbReference>
<dbReference type="HAMAP" id="MF_00903">
    <property type="entry name" value="TatE"/>
    <property type="match status" value="1"/>
</dbReference>
<dbReference type="InterPro" id="IPR003369">
    <property type="entry name" value="TatA/B/E"/>
</dbReference>
<dbReference type="InterPro" id="IPR006312">
    <property type="entry name" value="TatA/E"/>
</dbReference>
<dbReference type="InterPro" id="IPR024905">
    <property type="entry name" value="TatE"/>
</dbReference>
<dbReference type="NCBIfam" id="NF002448">
    <property type="entry name" value="PRK01614.1"/>
    <property type="match status" value="1"/>
</dbReference>
<dbReference type="NCBIfam" id="NF002960">
    <property type="entry name" value="PRK03625.1"/>
    <property type="match status" value="1"/>
</dbReference>
<dbReference type="NCBIfam" id="TIGR01411">
    <property type="entry name" value="tatAE"/>
    <property type="match status" value="1"/>
</dbReference>
<dbReference type="PANTHER" id="PTHR42982">
    <property type="entry name" value="SEC-INDEPENDENT PROTEIN TRANSLOCASE PROTEIN TATA"/>
    <property type="match status" value="1"/>
</dbReference>
<dbReference type="PANTHER" id="PTHR42982:SF5">
    <property type="entry name" value="SEC-INDEPENDENT PROTEIN TRANSLOCASE PROTEIN TATE"/>
    <property type="match status" value="1"/>
</dbReference>
<dbReference type="Pfam" id="PF02416">
    <property type="entry name" value="TatA_B_E"/>
    <property type="match status" value="1"/>
</dbReference>